<sequence>MTSDLETQLQQLQTEAVAAITSADTLDALETLRVSYLGKKGQLSQILKGMGKLDASERPKIGGLANQVKEALQQGLEQKKSDLNQAAIAAQLAAETLDVTMPGTYIPQGHIHPLNSTIDKALDIFVGLGYTIAQGPEMETDYYNFEALNTPPDHPARDMQDTFYLPDGNLLRTHTSAVQIHYMEDHEPPIRIAAPGRCYRRDTEDATHAAVFHQIEILAVDKGLTFTDLKGTIKVFIEQMFGDVPIRFRASYFPFTEPSAEVDVQWKGRWLEVLGCGMVDPNVLKNVGYDPEVYTGFAAGFGVERFAMVLHQIDDIRRLYTSDLRFLRQF</sequence>
<accession>B0C6I2</accession>
<evidence type="ECO:0000255" key="1">
    <source>
        <dbReference type="HAMAP-Rule" id="MF_00281"/>
    </source>
</evidence>
<keyword id="KW-0030">Aminoacyl-tRNA synthetase</keyword>
<keyword id="KW-0067">ATP-binding</keyword>
<keyword id="KW-0963">Cytoplasm</keyword>
<keyword id="KW-0436">Ligase</keyword>
<keyword id="KW-0460">Magnesium</keyword>
<keyword id="KW-0479">Metal-binding</keyword>
<keyword id="KW-0547">Nucleotide-binding</keyword>
<keyword id="KW-0648">Protein biosynthesis</keyword>
<keyword id="KW-1185">Reference proteome</keyword>
<dbReference type="EC" id="6.1.1.20" evidence="1"/>
<dbReference type="EMBL" id="CP000828">
    <property type="protein sequence ID" value="ABW26403.1"/>
    <property type="molecule type" value="Genomic_DNA"/>
</dbReference>
<dbReference type="RefSeq" id="WP_012161935.1">
    <property type="nucleotide sequence ID" value="NC_009925.1"/>
</dbReference>
<dbReference type="SMR" id="B0C6I2"/>
<dbReference type="STRING" id="329726.AM1_1373"/>
<dbReference type="KEGG" id="amr:AM1_1373"/>
<dbReference type="eggNOG" id="COG0016">
    <property type="taxonomic scope" value="Bacteria"/>
</dbReference>
<dbReference type="HOGENOM" id="CLU_025086_0_1_3"/>
<dbReference type="OrthoDB" id="9800719at2"/>
<dbReference type="Proteomes" id="UP000000268">
    <property type="component" value="Chromosome"/>
</dbReference>
<dbReference type="GO" id="GO:0005737">
    <property type="term" value="C:cytoplasm"/>
    <property type="evidence" value="ECO:0007669"/>
    <property type="project" value="UniProtKB-SubCell"/>
</dbReference>
<dbReference type="GO" id="GO:0005524">
    <property type="term" value="F:ATP binding"/>
    <property type="evidence" value="ECO:0007669"/>
    <property type="project" value="UniProtKB-UniRule"/>
</dbReference>
<dbReference type="GO" id="GO:0000287">
    <property type="term" value="F:magnesium ion binding"/>
    <property type="evidence" value="ECO:0007669"/>
    <property type="project" value="UniProtKB-UniRule"/>
</dbReference>
<dbReference type="GO" id="GO:0004826">
    <property type="term" value="F:phenylalanine-tRNA ligase activity"/>
    <property type="evidence" value="ECO:0007669"/>
    <property type="project" value="UniProtKB-UniRule"/>
</dbReference>
<dbReference type="GO" id="GO:0000049">
    <property type="term" value="F:tRNA binding"/>
    <property type="evidence" value="ECO:0007669"/>
    <property type="project" value="InterPro"/>
</dbReference>
<dbReference type="GO" id="GO:0006432">
    <property type="term" value="P:phenylalanyl-tRNA aminoacylation"/>
    <property type="evidence" value="ECO:0007669"/>
    <property type="project" value="UniProtKB-UniRule"/>
</dbReference>
<dbReference type="CDD" id="cd00496">
    <property type="entry name" value="PheRS_alpha_core"/>
    <property type="match status" value="1"/>
</dbReference>
<dbReference type="FunFam" id="3.30.930.10:FF:000003">
    <property type="entry name" value="Phenylalanine--tRNA ligase alpha subunit"/>
    <property type="match status" value="1"/>
</dbReference>
<dbReference type="Gene3D" id="3.30.930.10">
    <property type="entry name" value="Bira Bifunctional Protein, Domain 2"/>
    <property type="match status" value="1"/>
</dbReference>
<dbReference type="HAMAP" id="MF_00281">
    <property type="entry name" value="Phe_tRNA_synth_alpha1"/>
    <property type="match status" value="1"/>
</dbReference>
<dbReference type="InterPro" id="IPR006195">
    <property type="entry name" value="aa-tRNA-synth_II"/>
</dbReference>
<dbReference type="InterPro" id="IPR045864">
    <property type="entry name" value="aa-tRNA-synth_II/BPL/LPL"/>
</dbReference>
<dbReference type="InterPro" id="IPR004529">
    <property type="entry name" value="Phe-tRNA-synth_IIc_asu"/>
</dbReference>
<dbReference type="InterPro" id="IPR004188">
    <property type="entry name" value="Phe-tRNA_ligase_II_N"/>
</dbReference>
<dbReference type="InterPro" id="IPR022911">
    <property type="entry name" value="Phe_tRNA_ligase_alpha1_bac"/>
</dbReference>
<dbReference type="InterPro" id="IPR002319">
    <property type="entry name" value="Phenylalanyl-tRNA_Synthase"/>
</dbReference>
<dbReference type="InterPro" id="IPR010978">
    <property type="entry name" value="tRNA-bd_arm"/>
</dbReference>
<dbReference type="NCBIfam" id="TIGR00468">
    <property type="entry name" value="pheS"/>
    <property type="match status" value="1"/>
</dbReference>
<dbReference type="PANTHER" id="PTHR11538:SF41">
    <property type="entry name" value="PHENYLALANINE--TRNA LIGASE, MITOCHONDRIAL"/>
    <property type="match status" value="1"/>
</dbReference>
<dbReference type="PANTHER" id="PTHR11538">
    <property type="entry name" value="PHENYLALANYL-TRNA SYNTHETASE"/>
    <property type="match status" value="1"/>
</dbReference>
<dbReference type="Pfam" id="PF02912">
    <property type="entry name" value="Phe_tRNA-synt_N"/>
    <property type="match status" value="1"/>
</dbReference>
<dbReference type="Pfam" id="PF01409">
    <property type="entry name" value="tRNA-synt_2d"/>
    <property type="match status" value="1"/>
</dbReference>
<dbReference type="SUPFAM" id="SSF55681">
    <property type="entry name" value="Class II aaRS and biotin synthetases"/>
    <property type="match status" value="1"/>
</dbReference>
<dbReference type="SUPFAM" id="SSF46589">
    <property type="entry name" value="tRNA-binding arm"/>
    <property type="match status" value="1"/>
</dbReference>
<dbReference type="PROSITE" id="PS50862">
    <property type="entry name" value="AA_TRNA_LIGASE_II"/>
    <property type="match status" value="1"/>
</dbReference>
<gene>
    <name evidence="1" type="primary">pheS</name>
    <name type="ordered locus">AM1_1373</name>
</gene>
<reference key="1">
    <citation type="journal article" date="2008" name="Proc. Natl. Acad. Sci. U.S.A.">
        <title>Niche adaptation and genome expansion in the chlorophyll d-producing cyanobacterium Acaryochloris marina.</title>
        <authorList>
            <person name="Swingley W.D."/>
            <person name="Chen M."/>
            <person name="Cheung P.C."/>
            <person name="Conrad A.L."/>
            <person name="Dejesa L.C."/>
            <person name="Hao J."/>
            <person name="Honchak B.M."/>
            <person name="Karbach L.E."/>
            <person name="Kurdoglu A."/>
            <person name="Lahiri S."/>
            <person name="Mastrian S.D."/>
            <person name="Miyashita H."/>
            <person name="Page L."/>
            <person name="Ramakrishna P."/>
            <person name="Satoh S."/>
            <person name="Sattley W.M."/>
            <person name="Shimada Y."/>
            <person name="Taylor H.L."/>
            <person name="Tomo T."/>
            <person name="Tsuchiya T."/>
            <person name="Wang Z.T."/>
            <person name="Raymond J."/>
            <person name="Mimuro M."/>
            <person name="Blankenship R.E."/>
            <person name="Touchman J.W."/>
        </authorList>
    </citation>
    <scope>NUCLEOTIDE SEQUENCE [LARGE SCALE GENOMIC DNA]</scope>
    <source>
        <strain>MBIC 11017</strain>
    </source>
</reference>
<feature type="chain" id="PRO_1000132555" description="Phenylalanine--tRNA ligase alpha subunit">
    <location>
        <begin position="1"/>
        <end position="330"/>
    </location>
</feature>
<feature type="binding site" evidence="1">
    <location>
        <position position="257"/>
    </location>
    <ligand>
        <name>Mg(2+)</name>
        <dbReference type="ChEBI" id="CHEBI:18420"/>
        <note>shared with beta subunit</note>
    </ligand>
</feature>
<protein>
    <recommendedName>
        <fullName evidence="1">Phenylalanine--tRNA ligase alpha subunit</fullName>
        <ecNumber evidence="1">6.1.1.20</ecNumber>
    </recommendedName>
    <alternativeName>
        <fullName evidence="1">Phenylalanyl-tRNA synthetase alpha subunit</fullName>
        <shortName evidence="1">PheRS</shortName>
    </alternativeName>
</protein>
<name>SYFA_ACAM1</name>
<organism>
    <name type="scientific">Acaryochloris marina (strain MBIC 11017)</name>
    <dbReference type="NCBI Taxonomy" id="329726"/>
    <lineage>
        <taxon>Bacteria</taxon>
        <taxon>Bacillati</taxon>
        <taxon>Cyanobacteriota</taxon>
        <taxon>Cyanophyceae</taxon>
        <taxon>Acaryochloridales</taxon>
        <taxon>Acaryochloridaceae</taxon>
        <taxon>Acaryochloris</taxon>
    </lineage>
</organism>
<proteinExistence type="inferred from homology"/>
<comment type="catalytic activity">
    <reaction evidence="1">
        <text>tRNA(Phe) + L-phenylalanine + ATP = L-phenylalanyl-tRNA(Phe) + AMP + diphosphate + H(+)</text>
        <dbReference type="Rhea" id="RHEA:19413"/>
        <dbReference type="Rhea" id="RHEA-COMP:9668"/>
        <dbReference type="Rhea" id="RHEA-COMP:9699"/>
        <dbReference type="ChEBI" id="CHEBI:15378"/>
        <dbReference type="ChEBI" id="CHEBI:30616"/>
        <dbReference type="ChEBI" id="CHEBI:33019"/>
        <dbReference type="ChEBI" id="CHEBI:58095"/>
        <dbReference type="ChEBI" id="CHEBI:78442"/>
        <dbReference type="ChEBI" id="CHEBI:78531"/>
        <dbReference type="ChEBI" id="CHEBI:456215"/>
        <dbReference type="EC" id="6.1.1.20"/>
    </reaction>
</comment>
<comment type="cofactor">
    <cofactor evidence="1">
        <name>Mg(2+)</name>
        <dbReference type="ChEBI" id="CHEBI:18420"/>
    </cofactor>
    <text evidence="1">Binds 2 magnesium ions per tetramer.</text>
</comment>
<comment type="subunit">
    <text evidence="1">Tetramer of two alpha and two beta subunits.</text>
</comment>
<comment type="subcellular location">
    <subcellularLocation>
        <location evidence="1">Cytoplasm</location>
    </subcellularLocation>
</comment>
<comment type="similarity">
    <text evidence="1">Belongs to the class-II aminoacyl-tRNA synthetase family. Phe-tRNA synthetase alpha subunit type 1 subfamily.</text>
</comment>